<keyword id="KW-0028">Amino-acid biosynthesis</keyword>
<keyword id="KW-0061">Asparagine biosynthesis</keyword>
<keyword id="KW-0067">ATP-binding</keyword>
<keyword id="KW-0963">Cytoplasm</keyword>
<keyword id="KW-0436">Ligase</keyword>
<keyword id="KW-0547">Nucleotide-binding</keyword>
<gene>
    <name evidence="1" type="primary">asnA</name>
    <name type="ordered locus">STER_0424</name>
</gene>
<comment type="catalytic activity">
    <reaction evidence="1">
        <text>L-aspartate + NH4(+) + ATP = L-asparagine + AMP + diphosphate + H(+)</text>
        <dbReference type="Rhea" id="RHEA:11372"/>
        <dbReference type="ChEBI" id="CHEBI:15378"/>
        <dbReference type="ChEBI" id="CHEBI:28938"/>
        <dbReference type="ChEBI" id="CHEBI:29991"/>
        <dbReference type="ChEBI" id="CHEBI:30616"/>
        <dbReference type="ChEBI" id="CHEBI:33019"/>
        <dbReference type="ChEBI" id="CHEBI:58048"/>
        <dbReference type="ChEBI" id="CHEBI:456215"/>
        <dbReference type="EC" id="6.3.1.1"/>
    </reaction>
</comment>
<comment type="pathway">
    <text evidence="1">Amino-acid biosynthesis; L-asparagine biosynthesis; L-asparagine from L-aspartate (ammonia route): step 1/1.</text>
</comment>
<comment type="subcellular location">
    <subcellularLocation>
        <location evidence="1">Cytoplasm</location>
    </subcellularLocation>
</comment>
<comment type="similarity">
    <text evidence="1">Belongs to the class-II aminoacyl-tRNA synthetase family. AsnA subfamily.</text>
</comment>
<sequence length="330" mass="37495">MKKSFIDQQKEISFVKNTFTQYLIDKLDVVEVQGPILSKVGDGMQDNLNGIENPVTVNVLQIPDATYEVVHSLAKWKRHTLARFGFNEGEGLVVNMKALRPDEDSLDATHSVYVDQWDWEKVIPDGHRNIAYLKETVETIYKVIRLTELAVEARYDIEAVLPKKITFIHSEELVEKYPDLTPKERENAITKEYGAVFLIGIGGVLPDGKPHDGRAPDYDDWTTESEKGYHGLNGDILVWNEQLGHAFELSSMGIRVDEDALKRQVEITGDQDRLKLDWHQALLHGQFPLTIGGGIGQSRMAMFLLRKKHIGEVQTSVWPDAVRETYENIL</sequence>
<organism>
    <name type="scientific">Streptococcus thermophilus (strain ATCC BAA-491 / LMD-9)</name>
    <dbReference type="NCBI Taxonomy" id="322159"/>
    <lineage>
        <taxon>Bacteria</taxon>
        <taxon>Bacillati</taxon>
        <taxon>Bacillota</taxon>
        <taxon>Bacilli</taxon>
        <taxon>Lactobacillales</taxon>
        <taxon>Streptococcaceae</taxon>
        <taxon>Streptococcus</taxon>
    </lineage>
</organism>
<evidence type="ECO:0000255" key="1">
    <source>
        <dbReference type="HAMAP-Rule" id="MF_00555"/>
    </source>
</evidence>
<accession>Q03M60</accession>
<proteinExistence type="inferred from homology"/>
<protein>
    <recommendedName>
        <fullName evidence="1">Aspartate--ammonia ligase</fullName>
        <ecNumber evidence="1">6.3.1.1</ecNumber>
    </recommendedName>
    <alternativeName>
        <fullName evidence="1">Asparagine synthetase A</fullName>
    </alternativeName>
</protein>
<name>ASNA_STRTD</name>
<reference key="1">
    <citation type="journal article" date="2006" name="Proc. Natl. Acad. Sci. U.S.A.">
        <title>Comparative genomics of the lactic acid bacteria.</title>
        <authorList>
            <person name="Makarova K.S."/>
            <person name="Slesarev A."/>
            <person name="Wolf Y.I."/>
            <person name="Sorokin A."/>
            <person name="Mirkin B."/>
            <person name="Koonin E.V."/>
            <person name="Pavlov A."/>
            <person name="Pavlova N."/>
            <person name="Karamychev V."/>
            <person name="Polouchine N."/>
            <person name="Shakhova V."/>
            <person name="Grigoriev I."/>
            <person name="Lou Y."/>
            <person name="Rohksar D."/>
            <person name="Lucas S."/>
            <person name="Huang K."/>
            <person name="Goodstein D.M."/>
            <person name="Hawkins T."/>
            <person name="Plengvidhya V."/>
            <person name="Welker D."/>
            <person name="Hughes J."/>
            <person name="Goh Y."/>
            <person name="Benson A."/>
            <person name="Baldwin K."/>
            <person name="Lee J.-H."/>
            <person name="Diaz-Muniz I."/>
            <person name="Dosti B."/>
            <person name="Smeianov V."/>
            <person name="Wechter W."/>
            <person name="Barabote R."/>
            <person name="Lorca G."/>
            <person name="Altermann E."/>
            <person name="Barrangou R."/>
            <person name="Ganesan B."/>
            <person name="Xie Y."/>
            <person name="Rawsthorne H."/>
            <person name="Tamir D."/>
            <person name="Parker C."/>
            <person name="Breidt F."/>
            <person name="Broadbent J.R."/>
            <person name="Hutkins R."/>
            <person name="O'Sullivan D."/>
            <person name="Steele J."/>
            <person name="Unlu G."/>
            <person name="Saier M.H. Jr."/>
            <person name="Klaenhammer T."/>
            <person name="Richardson P."/>
            <person name="Kozyavkin S."/>
            <person name="Weimer B.C."/>
            <person name="Mills D.A."/>
        </authorList>
    </citation>
    <scope>NUCLEOTIDE SEQUENCE [LARGE SCALE GENOMIC DNA]</scope>
    <source>
        <strain>ATCC BAA-491 / LMD-9</strain>
    </source>
</reference>
<feature type="chain" id="PRO_1000017973" description="Aspartate--ammonia ligase">
    <location>
        <begin position="1"/>
        <end position="330"/>
    </location>
</feature>
<dbReference type="EC" id="6.3.1.1" evidence="1"/>
<dbReference type="EMBL" id="CP000419">
    <property type="protein sequence ID" value="ABJ65712.1"/>
    <property type="molecule type" value="Genomic_DNA"/>
</dbReference>
<dbReference type="RefSeq" id="WP_011226888.1">
    <property type="nucleotide sequence ID" value="NC_008532.1"/>
</dbReference>
<dbReference type="SMR" id="Q03M60"/>
<dbReference type="KEGG" id="ste:STER_0424"/>
<dbReference type="HOGENOM" id="CLU_071543_0_0_9"/>
<dbReference type="UniPathway" id="UPA00134">
    <property type="reaction ID" value="UER00194"/>
</dbReference>
<dbReference type="GO" id="GO:0005829">
    <property type="term" value="C:cytosol"/>
    <property type="evidence" value="ECO:0007669"/>
    <property type="project" value="TreeGrafter"/>
</dbReference>
<dbReference type="GO" id="GO:0004071">
    <property type="term" value="F:aspartate-ammonia ligase activity"/>
    <property type="evidence" value="ECO:0007669"/>
    <property type="project" value="UniProtKB-UniRule"/>
</dbReference>
<dbReference type="GO" id="GO:0005524">
    <property type="term" value="F:ATP binding"/>
    <property type="evidence" value="ECO:0007669"/>
    <property type="project" value="UniProtKB-UniRule"/>
</dbReference>
<dbReference type="GO" id="GO:0140096">
    <property type="term" value="F:catalytic activity, acting on a protein"/>
    <property type="evidence" value="ECO:0007669"/>
    <property type="project" value="UniProtKB-ARBA"/>
</dbReference>
<dbReference type="GO" id="GO:0016740">
    <property type="term" value="F:transferase activity"/>
    <property type="evidence" value="ECO:0007669"/>
    <property type="project" value="UniProtKB-ARBA"/>
</dbReference>
<dbReference type="GO" id="GO:0070981">
    <property type="term" value="P:L-asparagine biosynthetic process"/>
    <property type="evidence" value="ECO:0007669"/>
    <property type="project" value="UniProtKB-UniRule"/>
</dbReference>
<dbReference type="CDD" id="cd00645">
    <property type="entry name" value="AsnA"/>
    <property type="match status" value="1"/>
</dbReference>
<dbReference type="Gene3D" id="3.30.930.10">
    <property type="entry name" value="Bira Bifunctional Protein, Domain 2"/>
    <property type="match status" value="1"/>
</dbReference>
<dbReference type="HAMAP" id="MF_00555">
    <property type="entry name" value="AsnA"/>
    <property type="match status" value="1"/>
</dbReference>
<dbReference type="InterPro" id="IPR006195">
    <property type="entry name" value="aa-tRNA-synth_II"/>
</dbReference>
<dbReference type="InterPro" id="IPR045864">
    <property type="entry name" value="aa-tRNA-synth_II/BPL/LPL"/>
</dbReference>
<dbReference type="InterPro" id="IPR004618">
    <property type="entry name" value="AsnA"/>
</dbReference>
<dbReference type="NCBIfam" id="TIGR00669">
    <property type="entry name" value="asnA"/>
    <property type="match status" value="1"/>
</dbReference>
<dbReference type="PANTHER" id="PTHR30073">
    <property type="entry name" value="ASPARTATE--AMMONIA LIGASE"/>
    <property type="match status" value="1"/>
</dbReference>
<dbReference type="PANTHER" id="PTHR30073:SF5">
    <property type="entry name" value="ASPARTATE--AMMONIA LIGASE"/>
    <property type="match status" value="1"/>
</dbReference>
<dbReference type="Pfam" id="PF03590">
    <property type="entry name" value="AsnA"/>
    <property type="match status" value="1"/>
</dbReference>
<dbReference type="PIRSF" id="PIRSF001555">
    <property type="entry name" value="Asp_ammon_ligase"/>
    <property type="match status" value="1"/>
</dbReference>
<dbReference type="SUPFAM" id="SSF55681">
    <property type="entry name" value="Class II aaRS and biotin synthetases"/>
    <property type="match status" value="1"/>
</dbReference>
<dbReference type="PROSITE" id="PS50862">
    <property type="entry name" value="AA_TRNA_LIGASE_II"/>
    <property type="match status" value="1"/>
</dbReference>